<evidence type="ECO:0000256" key="1">
    <source>
        <dbReference type="SAM" id="MobiDB-lite"/>
    </source>
</evidence>
<dbReference type="EMBL" id="AF157835">
    <property type="protein sequence ID" value="AAF03995.1"/>
    <property type="molecule type" value="Genomic_DNA"/>
</dbReference>
<dbReference type="RefSeq" id="NP_051013.1">
    <property type="nucleotide sequence ID" value="NC_000935.1"/>
</dbReference>
<dbReference type="KEGG" id="vg:1262346"/>
<dbReference type="Proteomes" id="UP000000853">
    <property type="component" value="Genome"/>
</dbReference>
<feature type="chain" id="PRO_0000077876" description="Putative protein p52">
    <location>
        <begin position="1"/>
        <end position="100"/>
    </location>
</feature>
<feature type="region of interest" description="Disordered" evidence="1">
    <location>
        <begin position="81"/>
        <end position="100"/>
    </location>
</feature>
<feature type="compositionally biased region" description="Basic and acidic residues" evidence="1">
    <location>
        <begin position="91"/>
        <end position="100"/>
    </location>
</feature>
<accession>Q9T1P6</accession>
<protein>
    <recommendedName>
        <fullName>Putative protein p52</fullName>
    </recommendedName>
</protein>
<name>VP52_BPAPS</name>
<organismHost>
    <name type="scientific">Escherichia coli</name>
    <dbReference type="NCBI Taxonomy" id="562"/>
</organismHost>
<organism>
    <name type="scientific">Acyrthosiphon pisum secondary endosymbiont phage 1</name>
    <name type="common">Bacteriophage APSE-1</name>
    <dbReference type="NCBI Taxonomy" id="2682836"/>
    <lineage>
        <taxon>Viruses</taxon>
        <taxon>Duplodnaviria</taxon>
        <taxon>Heunggongvirae</taxon>
        <taxon>Uroviricota</taxon>
        <taxon>Caudoviricetes</taxon>
        <taxon>Sendosyvirus</taxon>
        <taxon>Sendosyvirus APSE1</taxon>
    </lineage>
</organism>
<proteinExistence type="predicted"/>
<reference key="1">
    <citation type="journal article" date="1999" name="Virology">
        <title>Isolation and characterization of APSE-1, a bacteriophage infecting the secondary endosymbiont of acyrthosiphon pisum.</title>
        <authorList>
            <person name="van der Wilk F."/>
            <person name="Dullemans A.M."/>
            <person name="Verbeek M."/>
            <person name="van den Heuvel J.F.J.M."/>
        </authorList>
    </citation>
    <scope>NUCLEOTIDE SEQUENCE [LARGE SCALE GENOMIC DNA]</scope>
</reference>
<keyword id="KW-1185">Reference proteome</keyword>
<gene>
    <name type="primary">52</name>
</gene>
<sequence length="100" mass="10824">MRFGASLNCGASGWVKSTKSPLTSLWTNCAWAKHNPPFALQNRHCLTPGEKALSGRASRPLRSARVAIFMAFCAPDLACSPKSFKSSTDTAHSDRWLSLG</sequence>